<accession>A2QQ79</accession>
<name>NPR3_ASPNC</name>
<proteinExistence type="inferred from homology"/>
<evidence type="ECO:0000250" key="1"/>
<evidence type="ECO:0000255" key="2"/>
<evidence type="ECO:0000256" key="3">
    <source>
        <dbReference type="SAM" id="MobiDB-lite"/>
    </source>
</evidence>
<evidence type="ECO:0000305" key="4"/>
<feature type="signal peptide" evidence="2">
    <location>
        <begin position="1"/>
        <end position="23"/>
    </location>
</feature>
<feature type="chain" id="PRO_0000301793" description="Nitrogen permease regulator 3">
    <location>
        <begin position="24"/>
        <end position="869"/>
    </location>
</feature>
<feature type="region of interest" description="Disordered" evidence="3">
    <location>
        <begin position="31"/>
        <end position="180"/>
    </location>
</feature>
<feature type="region of interest" description="Disordered" evidence="3">
    <location>
        <begin position="228"/>
        <end position="275"/>
    </location>
</feature>
<feature type="region of interest" description="Disordered" evidence="3">
    <location>
        <begin position="662"/>
        <end position="702"/>
    </location>
</feature>
<feature type="region of interest" description="Disordered" evidence="3">
    <location>
        <begin position="842"/>
        <end position="869"/>
    </location>
</feature>
<feature type="compositionally biased region" description="Basic residues" evidence="3">
    <location>
        <begin position="45"/>
        <end position="55"/>
    </location>
</feature>
<feature type="compositionally biased region" description="Low complexity" evidence="3">
    <location>
        <begin position="57"/>
        <end position="70"/>
    </location>
</feature>
<feature type="compositionally biased region" description="Low complexity" evidence="3">
    <location>
        <begin position="80"/>
        <end position="102"/>
    </location>
</feature>
<feature type="compositionally biased region" description="Polar residues" evidence="3">
    <location>
        <begin position="115"/>
        <end position="129"/>
    </location>
</feature>
<feature type="compositionally biased region" description="Basic residues" evidence="3">
    <location>
        <begin position="229"/>
        <end position="239"/>
    </location>
</feature>
<feature type="compositionally biased region" description="Acidic residues" evidence="3">
    <location>
        <begin position="254"/>
        <end position="271"/>
    </location>
</feature>
<feature type="compositionally biased region" description="Low complexity" evidence="3">
    <location>
        <begin position="679"/>
        <end position="692"/>
    </location>
</feature>
<feature type="compositionally biased region" description="Polar residues" evidence="3">
    <location>
        <begin position="842"/>
        <end position="853"/>
    </location>
</feature>
<reference key="1">
    <citation type="journal article" date="2007" name="Nat. Biotechnol.">
        <title>Genome sequencing and analysis of the versatile cell factory Aspergillus niger CBS 513.88.</title>
        <authorList>
            <person name="Pel H.J."/>
            <person name="de Winde J.H."/>
            <person name="Archer D.B."/>
            <person name="Dyer P.S."/>
            <person name="Hofmann G."/>
            <person name="Schaap P.J."/>
            <person name="Turner G."/>
            <person name="de Vries R.P."/>
            <person name="Albang R."/>
            <person name="Albermann K."/>
            <person name="Andersen M.R."/>
            <person name="Bendtsen J.D."/>
            <person name="Benen J.A.E."/>
            <person name="van den Berg M."/>
            <person name="Breestraat S."/>
            <person name="Caddick M.X."/>
            <person name="Contreras R."/>
            <person name="Cornell M."/>
            <person name="Coutinho P.M."/>
            <person name="Danchin E.G.J."/>
            <person name="Debets A.J.M."/>
            <person name="Dekker P."/>
            <person name="van Dijck P.W.M."/>
            <person name="van Dijk A."/>
            <person name="Dijkhuizen L."/>
            <person name="Driessen A.J.M."/>
            <person name="d'Enfert C."/>
            <person name="Geysens S."/>
            <person name="Goosen C."/>
            <person name="Groot G.S.P."/>
            <person name="de Groot P.W.J."/>
            <person name="Guillemette T."/>
            <person name="Henrissat B."/>
            <person name="Herweijer M."/>
            <person name="van den Hombergh J.P.T.W."/>
            <person name="van den Hondel C.A.M.J.J."/>
            <person name="van der Heijden R.T.J.M."/>
            <person name="van der Kaaij R.M."/>
            <person name="Klis F.M."/>
            <person name="Kools H.J."/>
            <person name="Kubicek C.P."/>
            <person name="van Kuyk P.A."/>
            <person name="Lauber J."/>
            <person name="Lu X."/>
            <person name="van der Maarel M.J.E.C."/>
            <person name="Meulenberg R."/>
            <person name="Menke H."/>
            <person name="Mortimer M.A."/>
            <person name="Nielsen J."/>
            <person name="Oliver S.G."/>
            <person name="Olsthoorn M."/>
            <person name="Pal K."/>
            <person name="van Peij N.N.M.E."/>
            <person name="Ram A.F.J."/>
            <person name="Rinas U."/>
            <person name="Roubos J.A."/>
            <person name="Sagt C.M.J."/>
            <person name="Schmoll M."/>
            <person name="Sun J."/>
            <person name="Ussery D."/>
            <person name="Varga J."/>
            <person name="Vervecken W."/>
            <person name="van de Vondervoort P.J.J."/>
            <person name="Wedler H."/>
            <person name="Woesten H.A.B."/>
            <person name="Zeng A.-P."/>
            <person name="van Ooyen A.J.J."/>
            <person name="Visser J."/>
            <person name="Stam H."/>
        </authorList>
    </citation>
    <scope>NUCLEOTIDE SEQUENCE [LARGE SCALE GENOMIC DNA]</scope>
    <source>
        <strain>ATCC MYA-4892 / CBS 513.88 / FGSC A1513</strain>
    </source>
</reference>
<keyword id="KW-0469">Meiosis</keyword>
<keyword id="KW-1185">Reference proteome</keyword>
<keyword id="KW-0732">Signal</keyword>
<protein>
    <recommendedName>
        <fullName>Nitrogen permease regulator 3</fullName>
    </recommendedName>
    <alternativeName>
        <fullName>Required for meiotic nuclear division protein 11</fullName>
    </alternativeName>
</protein>
<comment type="function">
    <text evidence="1">Mediates inactivation of the TORC1 complex in response to amino acid starvation. Required for meiotic nuclear division (By similarity).</text>
</comment>
<comment type="similarity">
    <text evidence="4">Belongs to the NPR3 family.</text>
</comment>
<comment type="sequence caution" evidence="4">
    <conflict type="erroneous initiation">
        <sequence resource="EMBL-CDS" id="CAK39836"/>
    </conflict>
    <text>Extended N-terminus.</text>
</comment>
<dbReference type="EMBL" id="AM270160">
    <property type="protein sequence ID" value="CAK39836.1"/>
    <property type="status" value="ALT_INIT"/>
    <property type="molecule type" value="Genomic_DNA"/>
</dbReference>
<dbReference type="SMR" id="A2QQ79"/>
<dbReference type="EnsemblFungi" id="CAK39836">
    <property type="protein sequence ID" value="CAK39836"/>
    <property type="gene ID" value="An08g01560"/>
</dbReference>
<dbReference type="Proteomes" id="UP000006706">
    <property type="component" value="Chromosome 8R"/>
</dbReference>
<dbReference type="GO" id="GO:1990130">
    <property type="term" value="C:GATOR1 complex"/>
    <property type="evidence" value="ECO:0007669"/>
    <property type="project" value="TreeGrafter"/>
</dbReference>
<dbReference type="GO" id="GO:0034198">
    <property type="term" value="P:cellular response to amino acid starvation"/>
    <property type="evidence" value="ECO:0007669"/>
    <property type="project" value="TreeGrafter"/>
</dbReference>
<dbReference type="GO" id="GO:0051321">
    <property type="term" value="P:meiotic cell cycle"/>
    <property type="evidence" value="ECO:0007669"/>
    <property type="project" value="UniProtKB-KW"/>
</dbReference>
<dbReference type="GO" id="GO:1904262">
    <property type="term" value="P:negative regulation of TORC1 signaling"/>
    <property type="evidence" value="ECO:0007669"/>
    <property type="project" value="TreeGrafter"/>
</dbReference>
<dbReference type="GO" id="GO:0010508">
    <property type="term" value="P:positive regulation of autophagy"/>
    <property type="evidence" value="ECO:0007669"/>
    <property type="project" value="TreeGrafter"/>
</dbReference>
<dbReference type="GO" id="GO:0038202">
    <property type="term" value="P:TORC1 signaling"/>
    <property type="evidence" value="ECO:0007669"/>
    <property type="project" value="TreeGrafter"/>
</dbReference>
<dbReference type="InterPro" id="IPR056603">
    <property type="entry name" value="HTH_NPRL3"/>
</dbReference>
<dbReference type="InterPro" id="IPR005365">
    <property type="entry name" value="Npr3"/>
</dbReference>
<dbReference type="PANTHER" id="PTHR13153">
    <property type="entry name" value="CGTHBA PROTEIN -14 GENE PROTEIN"/>
    <property type="match status" value="1"/>
</dbReference>
<dbReference type="PANTHER" id="PTHR13153:SF5">
    <property type="entry name" value="GATOR COMPLEX PROTEIN NPRL3"/>
    <property type="match status" value="1"/>
</dbReference>
<dbReference type="Pfam" id="PF24064">
    <property type="entry name" value="HTH_NPRL3"/>
    <property type="match status" value="1"/>
</dbReference>
<dbReference type="Pfam" id="PF03666">
    <property type="entry name" value="NPR3"/>
    <property type="match status" value="1"/>
</dbReference>
<sequence>MSSIARPPDPCLVAIILIVRSRAGPRFVFHYPPNPLSENGLRGAPKARRPSRKNSKSNESSSSEDSSSTSSEDEDEAPITATAAAPATTGTATQPANATQNASHVAGSHPVAGRRSSNFGVVDDTTISGSPGGESQRAGSVGSGRGLMMRKRGTNSDAEEDAGAASDRQEDEAGPFRPPWESLLGLPADVWEKLLSPSRSWHKRRFEVGINDLAFVGWPVFVREDGTWRKQRRKKRKPRATWEGGELGHNETPGDGDGDGEGDEAGTEDDSPDRGTELIAASTETLSPKQMATTDSQRASMISVRSFRTLSEALDPDDKDCMTMFNVVFVLDPPLLEYSMRLREIYDNIIKKFSKALKWEQARTDYVWKEAQHISHIKEKAKEKRMSVNSLYSELISQSSLARAICTVFTSISASKIASVSLSPDVSISLQIPPLTSTPWLPGPTDKAYPGLWLTTADSVTPVDDPTADENTAPHQVLAKHFALLLLDNEASILKDVEASGGALAPALAHYIRCSKPTKSFAQISVSSGIPLSTIQMLASHLVYWRRARAIPPLHQRDTYIVSPNCDLSKLEVATAAYQAAFPTLPSLPKMLSAMSGTPRPYGSFIPSKDHKDTYFAILAWLLRGGWVTQLRAFARVKISPEIKMAVETALRQEEVDKYLSKRGSASDTEIREDLDDASSSSSSSLGSNGSGDETPMPGRYKRNNELDLSHSLLDQNTSLKTSSLILYPHRASPLESRWLGEVMARFPELQGDVPDGDLEYAGLRTSLKKYWPTFIKYFNGYDALEKIPVRESLKRKLVWQILMRLGLVTGQQSSIQLDPREQILKTVQFFTKTIHNFEINKTISPNPASSHVMTPRHTDGRNGTTPTN</sequence>
<gene>
    <name type="primary">npr3</name>
    <name type="synonym">rmd11</name>
    <name type="ORF">An08g01560</name>
</gene>
<organism>
    <name type="scientific">Aspergillus niger (strain ATCC MYA-4892 / CBS 513.88 / FGSC A1513)</name>
    <dbReference type="NCBI Taxonomy" id="425011"/>
    <lineage>
        <taxon>Eukaryota</taxon>
        <taxon>Fungi</taxon>
        <taxon>Dikarya</taxon>
        <taxon>Ascomycota</taxon>
        <taxon>Pezizomycotina</taxon>
        <taxon>Eurotiomycetes</taxon>
        <taxon>Eurotiomycetidae</taxon>
        <taxon>Eurotiales</taxon>
        <taxon>Aspergillaceae</taxon>
        <taxon>Aspergillus</taxon>
        <taxon>Aspergillus subgen. Circumdati</taxon>
    </lineage>
</organism>